<evidence type="ECO:0000255" key="1">
    <source>
        <dbReference type="HAMAP-Rule" id="MF_01014"/>
    </source>
</evidence>
<name>HIS4_BRUMB</name>
<reference key="1">
    <citation type="submission" date="2009-03" db="EMBL/GenBank/DDBJ databases">
        <title>Brucella melitensis ATCC 23457 whole genome shotgun sequencing project.</title>
        <authorList>
            <person name="Setubal J.C."/>
            <person name="Boyle S."/>
            <person name="Crasta O.R."/>
            <person name="Gillespie J.J."/>
            <person name="Kenyon R.W."/>
            <person name="Lu J."/>
            <person name="Mane S."/>
            <person name="Nagrani S."/>
            <person name="Shallom J.M."/>
            <person name="Shallom S."/>
            <person name="Shukla M."/>
            <person name="Snyder E.E."/>
            <person name="Sobral B.W."/>
            <person name="Wattam A.R."/>
            <person name="Will R."/>
            <person name="Williams K."/>
            <person name="Yoo H."/>
            <person name="Munk C."/>
            <person name="Tapia R."/>
            <person name="Han C."/>
            <person name="Detter J.C."/>
            <person name="Bruce D."/>
            <person name="Brettin T.S."/>
        </authorList>
    </citation>
    <scope>NUCLEOTIDE SEQUENCE [LARGE SCALE GENOMIC DNA]</scope>
    <source>
        <strain>ATCC 23457</strain>
    </source>
</reference>
<proteinExistence type="inferred from homology"/>
<comment type="catalytic activity">
    <reaction evidence="1">
        <text>1-(5-phospho-beta-D-ribosyl)-5-[(5-phospho-beta-D-ribosylamino)methylideneamino]imidazole-4-carboxamide = 5-[(5-phospho-1-deoxy-D-ribulos-1-ylimino)methylamino]-1-(5-phospho-beta-D-ribosyl)imidazole-4-carboxamide</text>
        <dbReference type="Rhea" id="RHEA:15469"/>
        <dbReference type="ChEBI" id="CHEBI:58435"/>
        <dbReference type="ChEBI" id="CHEBI:58525"/>
        <dbReference type="EC" id="5.3.1.16"/>
    </reaction>
</comment>
<comment type="pathway">
    <text evidence="1">Amino-acid biosynthesis; L-histidine biosynthesis; L-histidine from 5-phospho-alpha-D-ribose 1-diphosphate: step 4/9.</text>
</comment>
<comment type="subcellular location">
    <subcellularLocation>
        <location evidence="1">Cytoplasm</location>
    </subcellularLocation>
</comment>
<comment type="similarity">
    <text evidence="1">Belongs to the HisA/HisF family.</text>
</comment>
<organism>
    <name type="scientific">Brucella melitensis biotype 2 (strain ATCC 23457)</name>
    <dbReference type="NCBI Taxonomy" id="546272"/>
    <lineage>
        <taxon>Bacteria</taxon>
        <taxon>Pseudomonadati</taxon>
        <taxon>Pseudomonadota</taxon>
        <taxon>Alphaproteobacteria</taxon>
        <taxon>Hyphomicrobiales</taxon>
        <taxon>Brucellaceae</taxon>
        <taxon>Brucella/Ochrobactrum group</taxon>
        <taxon>Brucella</taxon>
    </lineage>
</organism>
<dbReference type="EC" id="5.3.1.16" evidence="1"/>
<dbReference type="EMBL" id="CP001488">
    <property type="protein sequence ID" value="ACO01794.1"/>
    <property type="molecule type" value="Genomic_DNA"/>
</dbReference>
<dbReference type="RefSeq" id="WP_002965150.1">
    <property type="nucleotide sequence ID" value="NC_012441.1"/>
</dbReference>
<dbReference type="SMR" id="C0RFX2"/>
<dbReference type="GeneID" id="97534653"/>
<dbReference type="KEGG" id="bmi:BMEA_A2146"/>
<dbReference type="HOGENOM" id="CLU_048577_1_1_5"/>
<dbReference type="UniPathway" id="UPA00031">
    <property type="reaction ID" value="UER00009"/>
</dbReference>
<dbReference type="Proteomes" id="UP000001748">
    <property type="component" value="Chromosome I"/>
</dbReference>
<dbReference type="GO" id="GO:0005737">
    <property type="term" value="C:cytoplasm"/>
    <property type="evidence" value="ECO:0007669"/>
    <property type="project" value="UniProtKB-SubCell"/>
</dbReference>
<dbReference type="GO" id="GO:0003949">
    <property type="term" value="F:1-(5-phosphoribosyl)-5-[(5-phosphoribosylamino)methylideneamino]imidazole-4-carboxamide isomerase activity"/>
    <property type="evidence" value="ECO:0007669"/>
    <property type="project" value="UniProtKB-UniRule"/>
</dbReference>
<dbReference type="GO" id="GO:0000105">
    <property type="term" value="P:L-histidine biosynthetic process"/>
    <property type="evidence" value="ECO:0007669"/>
    <property type="project" value="UniProtKB-UniRule"/>
</dbReference>
<dbReference type="GO" id="GO:0000162">
    <property type="term" value="P:L-tryptophan biosynthetic process"/>
    <property type="evidence" value="ECO:0007669"/>
    <property type="project" value="TreeGrafter"/>
</dbReference>
<dbReference type="CDD" id="cd04732">
    <property type="entry name" value="HisA"/>
    <property type="match status" value="1"/>
</dbReference>
<dbReference type="FunFam" id="3.20.20.70:FF:000009">
    <property type="entry name" value="1-(5-phosphoribosyl)-5-[(5-phosphoribosylamino)methylideneamino] imidazole-4-carboxamide isomerase"/>
    <property type="match status" value="1"/>
</dbReference>
<dbReference type="Gene3D" id="3.20.20.70">
    <property type="entry name" value="Aldolase class I"/>
    <property type="match status" value="1"/>
</dbReference>
<dbReference type="HAMAP" id="MF_01014">
    <property type="entry name" value="HisA"/>
    <property type="match status" value="1"/>
</dbReference>
<dbReference type="InterPro" id="IPR013785">
    <property type="entry name" value="Aldolase_TIM"/>
</dbReference>
<dbReference type="InterPro" id="IPR006062">
    <property type="entry name" value="His_biosynth"/>
</dbReference>
<dbReference type="InterPro" id="IPR006063">
    <property type="entry name" value="HisA_bact_arch"/>
</dbReference>
<dbReference type="InterPro" id="IPR044524">
    <property type="entry name" value="Isoase_HisA-like"/>
</dbReference>
<dbReference type="InterPro" id="IPR023016">
    <property type="entry name" value="Isoase_HisA-like_bact"/>
</dbReference>
<dbReference type="InterPro" id="IPR011060">
    <property type="entry name" value="RibuloseP-bd_barrel"/>
</dbReference>
<dbReference type="NCBIfam" id="TIGR00007">
    <property type="entry name" value="1-(5-phosphoribosyl)-5-[(5-phosphoribosylamino)methylideneamino]imidazole-4-carboxamide isomerase"/>
    <property type="match status" value="1"/>
</dbReference>
<dbReference type="PANTHER" id="PTHR43090">
    <property type="entry name" value="1-(5-PHOSPHORIBOSYL)-5-[(5-PHOSPHORIBOSYLAMINO)METHYLIDENEAMINO] IMIDAZOLE-4-CARBOXAMIDE ISOMERASE"/>
    <property type="match status" value="1"/>
</dbReference>
<dbReference type="PANTHER" id="PTHR43090:SF2">
    <property type="entry name" value="1-(5-PHOSPHORIBOSYL)-5-[(5-PHOSPHORIBOSYLAMINO)METHYLIDENEAMINO] IMIDAZOLE-4-CARBOXAMIDE ISOMERASE"/>
    <property type="match status" value="1"/>
</dbReference>
<dbReference type="Pfam" id="PF00977">
    <property type="entry name" value="His_biosynth"/>
    <property type="match status" value="1"/>
</dbReference>
<dbReference type="SUPFAM" id="SSF51366">
    <property type="entry name" value="Ribulose-phoshate binding barrel"/>
    <property type="match status" value="1"/>
</dbReference>
<feature type="chain" id="PRO_1000148957" description="1-(5-phosphoribosyl)-5-[(5-phosphoribosylamino)methylideneamino] imidazole-4-carboxamide isomerase">
    <location>
        <begin position="1"/>
        <end position="243"/>
    </location>
</feature>
<feature type="active site" description="Proton acceptor" evidence="1">
    <location>
        <position position="8"/>
    </location>
</feature>
<feature type="active site" description="Proton donor" evidence="1">
    <location>
        <position position="129"/>
    </location>
</feature>
<keyword id="KW-0028">Amino-acid biosynthesis</keyword>
<keyword id="KW-0963">Cytoplasm</keyword>
<keyword id="KW-0368">Histidine biosynthesis</keyword>
<keyword id="KW-0413">Isomerase</keyword>
<protein>
    <recommendedName>
        <fullName evidence="1">1-(5-phosphoribosyl)-5-[(5-phosphoribosylamino)methylideneamino] imidazole-4-carboxamide isomerase</fullName>
        <ecNumber evidence="1">5.3.1.16</ecNumber>
    </recommendedName>
    <alternativeName>
        <fullName evidence="1">Phosphoribosylformimino-5-aminoimidazole carboxamide ribotide isomerase</fullName>
    </alternativeName>
</protein>
<sequence>MILFPAIDLKDGQCVRLKLGDMDQATIYNEDPAAQAKAFEDQGFEWLHVVDLNGAFAGESVNGTAVEAILKATKNPVQLGGGIRTLAHIENWLSRGLRRVILGTVAVRDPALVMEACKAFPGQVAVGIDAKGGKVAVEGWAEASRLGVIELAKKFEGAGVAAIIYTDIDRDGVLAGINWDSTLALAEAVSIPVIASGGLASMEDIRRLATPEMRKLEGAISGRALYDGRIDPAEALSVLRAAA</sequence>
<gene>
    <name evidence="1" type="primary">hisA</name>
    <name type="ordered locus">BMEA_A2146</name>
</gene>
<accession>C0RFX2</accession>